<evidence type="ECO:0000255" key="1">
    <source>
        <dbReference type="HAMAP-Rule" id="MF_00003"/>
    </source>
</evidence>
<evidence type="ECO:0000305" key="2"/>
<reference key="1">
    <citation type="journal article" date="1984" name="Proc. Natl. Acad. Sci. U.S.A.">
        <title>Sequence of the initiation factor IF2 gene: unusual protein features and homologies with elongation factors.</title>
        <authorList>
            <person name="Sacerdot C."/>
            <person name="Dessen P."/>
            <person name="Hershey J.W.B."/>
            <person name="Plumbridge J.A."/>
            <person name="Grunberg-Manago M."/>
        </authorList>
    </citation>
    <scope>NUCLEOTIDE SEQUENCE [GENOMIC DNA]</scope>
    <source>
        <strain>3076 / Serotype Ib</strain>
    </source>
</reference>
<reference key="2">
    <citation type="journal article" date="1995" name="Genes Dev.">
        <title>Suppression of a cold-sensitive mutation in 16S rRNA by overexpression of a novel ribosome-binding factor, RbfA.</title>
        <authorList>
            <person name="Dammel C.S."/>
            <person name="Noller H.F."/>
        </authorList>
    </citation>
    <scope>NUCLEOTIDE SEQUENCE [GENOMIC DNA]</scope>
    <source>
        <strain>3076 / Serotype Ib</strain>
    </source>
</reference>
<reference key="3">
    <citation type="journal article" date="2000" name="Microbiology">
        <title>Investigation of the translation-initiation factor IF2 gene, infB, as a tool to study the population structure of Streptococcus agalactiae.</title>
        <authorList>
            <person name="Hedegaard J."/>
            <person name="Hauge M."/>
            <person name="Fage-Larsen J."/>
            <person name="Mortensen K.K."/>
            <person name="Kilian M."/>
            <person name="Sperling-Petersen H.U."/>
            <person name="Poulsen K."/>
        </authorList>
    </citation>
    <scope>NUCLEOTIDE SEQUENCE [GENOMIC DNA]</scope>
    <source>
        <strain>3074</strain>
        <strain>3076 / Serotype Ib</strain>
        <strain>3098</strain>
        <strain>3114</strain>
        <strain>3163</strain>
        <strain>3164</strain>
        <strain>941</strain>
        <strain>949 / Serotype II</strain>
    </source>
</reference>
<comment type="function">
    <text evidence="1">One of several proteins that assist in the late maturation steps of the functional core of the 30S ribosomal subunit. Associates with free 30S ribosomal subunits (but not with 30S subunits that are part of 70S ribosomes or polysomes). Required for efficient processing of 16S rRNA. May interact with the 5'-terminal helix region of 16S rRNA.</text>
</comment>
<comment type="subunit">
    <text evidence="1">Monomer. Binds 30S ribosomal subunits, but not 50S ribosomal subunits or 70S ribosomes.</text>
</comment>
<comment type="subcellular location">
    <subcellularLocation>
        <location evidence="1">Cytoplasm</location>
    </subcellularLocation>
</comment>
<comment type="similarity">
    <text evidence="1">Belongs to the RbfA family.</text>
</comment>
<comment type="sequence caution" evidence="2">
    <conflict type="erroneous initiation">
        <sequence resource="EMBL-CDS" id="CAA05920"/>
    </conflict>
    <text>Extended N-terminus.</text>
</comment>
<comment type="sequence caution" evidence="2">
    <conflict type="erroneous initiation">
        <sequence resource="EMBL-CDS" id="CAC00486"/>
    </conflict>
    <text>Extended N-terminus.</text>
</comment>
<comment type="sequence caution" evidence="2">
    <conflict type="erroneous initiation">
        <sequence resource="EMBL-CDS" id="CAC00488"/>
    </conflict>
    <text>Extended N-terminus.</text>
</comment>
<comment type="sequence caution" evidence="2">
    <conflict type="erroneous initiation">
        <sequence resource="EMBL-CDS" id="CAC00490"/>
    </conflict>
    <text>Extended N-terminus.</text>
</comment>
<comment type="sequence caution" evidence="2">
    <conflict type="erroneous initiation">
        <sequence resource="EMBL-CDS" id="CAC00492"/>
    </conflict>
    <text>Extended N-terminus.</text>
</comment>
<comment type="sequence caution" evidence="2">
    <conflict type="erroneous initiation">
        <sequence resource="EMBL-CDS" id="CAC00494"/>
    </conflict>
    <text>Extended N-terminus.</text>
</comment>
<comment type="sequence caution" evidence="2">
    <conflict type="erroneous initiation">
        <sequence resource="EMBL-CDS" id="CAC00496"/>
    </conflict>
    <text>Extended N-terminus.</text>
</comment>
<comment type="sequence caution" evidence="2">
    <conflict type="erroneous initiation">
        <sequence resource="EMBL-CDS" id="CAC00498"/>
    </conflict>
    <text>Extended N-terminus.</text>
</comment>
<sequence length="116" mass="13378">MANHRIDRVGMEIKREVNEILRLRVNDPRVQDVTITDVQMLGDLSMAKVFYTIHSTLASDNQKAQIGLEKATGTIKRELGKNLTMYKIPDLQFVKDESIEYGNKIDEMLRNLDKKD</sequence>
<name>RBFA_STRAG</name>
<keyword id="KW-0963">Cytoplasm</keyword>
<keyword id="KW-0690">Ribosome biogenesis</keyword>
<proteinExistence type="inferred from homology"/>
<gene>
    <name evidence="1" type="primary">rbfA</name>
</gene>
<dbReference type="EMBL" id="AJ003164">
    <property type="protein sequence ID" value="CAA05920.1"/>
    <property type="status" value="ALT_INIT"/>
    <property type="molecule type" value="Genomic_DNA"/>
</dbReference>
<dbReference type="EMBL" id="AJ251499">
    <property type="protein sequence ID" value="CAC00498.1"/>
    <property type="status" value="ALT_INIT"/>
    <property type="molecule type" value="Genomic_DNA"/>
</dbReference>
<dbReference type="EMBL" id="AJ251493">
    <property type="protein sequence ID" value="CAC00486.1"/>
    <property type="status" value="ALT_INIT"/>
    <property type="molecule type" value="Genomic_DNA"/>
</dbReference>
<dbReference type="EMBL" id="AJ251494">
    <property type="protein sequence ID" value="CAC00488.1"/>
    <property type="status" value="ALT_INIT"/>
    <property type="molecule type" value="Genomic_DNA"/>
</dbReference>
<dbReference type="EMBL" id="AJ251495">
    <property type="protein sequence ID" value="CAC00490.1"/>
    <property type="status" value="ALT_INIT"/>
    <property type="molecule type" value="Genomic_DNA"/>
</dbReference>
<dbReference type="EMBL" id="AJ251496">
    <property type="protein sequence ID" value="CAC00492.1"/>
    <property type="status" value="ALT_INIT"/>
    <property type="molecule type" value="Genomic_DNA"/>
</dbReference>
<dbReference type="EMBL" id="AJ251498">
    <property type="protein sequence ID" value="CAC00496.1"/>
    <property type="status" value="ALT_INIT"/>
    <property type="molecule type" value="Genomic_DNA"/>
</dbReference>
<dbReference type="EMBL" id="AJ251497">
    <property type="protein sequence ID" value="CAC00494.1"/>
    <property type="status" value="ALT_INIT"/>
    <property type="molecule type" value="Genomic_DNA"/>
</dbReference>
<dbReference type="RefSeq" id="WP_001273670.1">
    <property type="nucleotide sequence ID" value="NZ_WNJJ01000009.1"/>
</dbReference>
<dbReference type="SMR" id="Q9K333"/>
<dbReference type="GeneID" id="66885357"/>
<dbReference type="OMA" id="QHAKIFV"/>
<dbReference type="GO" id="GO:0005829">
    <property type="term" value="C:cytosol"/>
    <property type="evidence" value="ECO:0007669"/>
    <property type="project" value="TreeGrafter"/>
</dbReference>
<dbReference type="GO" id="GO:0043024">
    <property type="term" value="F:ribosomal small subunit binding"/>
    <property type="evidence" value="ECO:0007669"/>
    <property type="project" value="TreeGrafter"/>
</dbReference>
<dbReference type="GO" id="GO:0030490">
    <property type="term" value="P:maturation of SSU-rRNA"/>
    <property type="evidence" value="ECO:0007669"/>
    <property type="project" value="UniProtKB-UniRule"/>
</dbReference>
<dbReference type="Gene3D" id="3.30.300.20">
    <property type="match status" value="1"/>
</dbReference>
<dbReference type="HAMAP" id="MF_00003">
    <property type="entry name" value="RbfA"/>
    <property type="match status" value="1"/>
</dbReference>
<dbReference type="InterPro" id="IPR015946">
    <property type="entry name" value="KH_dom-like_a/b"/>
</dbReference>
<dbReference type="InterPro" id="IPR000238">
    <property type="entry name" value="RbfA"/>
</dbReference>
<dbReference type="InterPro" id="IPR023799">
    <property type="entry name" value="RbfA_dom_sf"/>
</dbReference>
<dbReference type="InterPro" id="IPR020053">
    <property type="entry name" value="Ribosome-bd_factorA_CS"/>
</dbReference>
<dbReference type="NCBIfam" id="TIGR00082">
    <property type="entry name" value="rbfA"/>
    <property type="match status" value="1"/>
</dbReference>
<dbReference type="PANTHER" id="PTHR33515">
    <property type="entry name" value="RIBOSOME-BINDING FACTOR A, CHLOROPLASTIC-RELATED"/>
    <property type="match status" value="1"/>
</dbReference>
<dbReference type="PANTHER" id="PTHR33515:SF1">
    <property type="entry name" value="RIBOSOME-BINDING FACTOR A, CHLOROPLASTIC-RELATED"/>
    <property type="match status" value="1"/>
</dbReference>
<dbReference type="Pfam" id="PF02033">
    <property type="entry name" value="RBFA"/>
    <property type="match status" value="1"/>
</dbReference>
<dbReference type="SUPFAM" id="SSF89919">
    <property type="entry name" value="Ribosome-binding factor A, RbfA"/>
    <property type="match status" value="1"/>
</dbReference>
<dbReference type="PROSITE" id="PS01319">
    <property type="entry name" value="RBFA"/>
    <property type="match status" value="1"/>
</dbReference>
<protein>
    <recommendedName>
        <fullName evidence="1">Ribosome-binding factor A</fullName>
    </recommendedName>
</protein>
<feature type="chain" id="PRO_0000102741" description="Ribosome-binding factor A">
    <location>
        <begin position="1"/>
        <end position="116"/>
    </location>
</feature>
<feature type="sequence variant" description="In strain: 941 and 3114.">
    <original>L</original>
    <variation>F</variation>
    <location>
        <position position="23"/>
    </location>
</feature>
<accession>Q9K333</accession>
<accession>Q9ZF19</accession>
<organism>
    <name type="scientific">Streptococcus agalactiae</name>
    <dbReference type="NCBI Taxonomy" id="1311"/>
    <lineage>
        <taxon>Bacteria</taxon>
        <taxon>Bacillati</taxon>
        <taxon>Bacillota</taxon>
        <taxon>Bacilli</taxon>
        <taxon>Lactobacillales</taxon>
        <taxon>Streptococcaceae</taxon>
        <taxon>Streptococcus</taxon>
    </lineage>
</organism>